<feature type="chain" id="PRO_0000142850" description="Major surface glycoprotein G">
    <location>
        <begin position="1"/>
        <end position="257"/>
    </location>
</feature>
<feature type="chain" id="PRO_0000451319" description="Mature secreted glycoprotein G">
    <location>
        <begin position="66"/>
        <end position="257"/>
    </location>
</feature>
<feature type="topological domain" description="Cytoplasmic" evidence="3">
    <location>
        <begin position="1"/>
        <end position="37"/>
    </location>
</feature>
<feature type="transmembrane region" description="Helical" evidence="3">
    <location>
        <begin position="38"/>
        <end position="66"/>
    </location>
</feature>
<feature type="topological domain" description="Extracellular" evidence="3">
    <location>
        <begin position="67"/>
        <end position="257"/>
    </location>
</feature>
<feature type="region of interest" description="Disordered" evidence="4">
    <location>
        <begin position="70"/>
        <end position="92"/>
    </location>
</feature>
<feature type="region of interest" description="Disordered" evidence="4">
    <location>
        <begin position="118"/>
        <end position="166"/>
    </location>
</feature>
<feature type="region of interest" description="Binding to host heparan sulfate" evidence="1">
    <location>
        <begin position="187"/>
        <end position="198"/>
    </location>
</feature>
<feature type="region of interest" description="Disordered" evidence="4">
    <location>
        <begin position="204"/>
        <end position="257"/>
    </location>
</feature>
<feature type="compositionally biased region" description="Polar residues" evidence="4">
    <location>
        <begin position="73"/>
        <end position="90"/>
    </location>
</feature>
<feature type="compositionally biased region" description="Polar residues" evidence="4">
    <location>
        <begin position="150"/>
        <end position="166"/>
    </location>
</feature>
<feature type="compositionally biased region" description="Basic residues" evidence="4">
    <location>
        <begin position="204"/>
        <end position="222"/>
    </location>
</feature>
<feature type="compositionally biased region" description="Polar residues" evidence="4">
    <location>
        <begin position="231"/>
        <end position="243"/>
    </location>
</feature>
<feature type="site" description="Cleavage" evidence="1">
    <location>
        <begin position="65"/>
        <end position="66"/>
    </location>
</feature>
<feature type="glycosylation site" description="O-linked (GalNAc...) threonine; by host" evidence="1">
    <location>
        <position position="72"/>
    </location>
</feature>
<feature type="glycosylation site" description="O-linked (GalNAc...) threonine; by host" evidence="1">
    <location>
        <position position="80"/>
    </location>
</feature>
<feature type="glycosylation site" description="N-linked (GlcNAc...) asparagine; by host" evidence="3">
    <location>
        <position position="85"/>
    </location>
</feature>
<feature type="glycosylation site" description="O-linked (GalNAc...) threonine; by host" evidence="1">
    <location>
        <position position="87"/>
    </location>
</feature>
<feature type="glycosylation site" description="O-linked (GalNAc...) threonine; by host" evidence="1">
    <location>
        <position position="92"/>
    </location>
</feature>
<feature type="glycosylation site" description="O-linked (GalNAc...) serine; by host" evidence="3">
    <location>
        <position position="105"/>
    </location>
</feature>
<feature type="glycosylation site" description="O-linked (GalNAc...) threonine; by host" evidence="3">
    <location>
        <position position="139"/>
    </location>
</feature>
<feature type="glycosylation site" description="N-linked (GlcNAc...) asparagine; by host" evidence="3">
    <location>
        <position position="163"/>
    </location>
</feature>
<feature type="glycosylation site" description="O-linked (GalNAc...) threonine; by host" evidence="3">
    <location>
        <position position="199"/>
    </location>
</feature>
<feature type="glycosylation site" description="O-linked (GalNAc...) threonine; by host" evidence="3">
    <location>
        <position position="215"/>
    </location>
</feature>
<feature type="glycosylation site" description="N-linked (GlcNAc...) asparagine; by host" evidence="3">
    <location>
        <position position="233"/>
    </location>
</feature>
<feature type="glycosylation site" description="N-linked (GlcNAc...) asparagine; by host" evidence="3">
    <location>
        <position position="251"/>
    </location>
</feature>
<feature type="glycosylation site" description="O-linked (GalNAc...) serine; by host" evidence="3">
    <location>
        <position position="253"/>
    </location>
</feature>
<feature type="disulfide bond" evidence="1">
    <location>
        <begin position="173"/>
        <end position="186"/>
    </location>
</feature>
<feature type="disulfide bond" evidence="1">
    <location>
        <begin position="176"/>
        <end position="182"/>
    </location>
</feature>
<feature type="splice variant" id="VSP_036518" description="In isoform Secreted glycoprotein G." evidence="1">
    <location>
        <begin position="1"/>
        <end position="47"/>
    </location>
</feature>
<dbReference type="EMBL" id="L27802">
    <property type="protein sequence ID" value="AAB47926.1"/>
    <property type="molecule type" value="Genomic_RNA"/>
</dbReference>
<dbReference type="SMR" id="P69350"/>
<dbReference type="GlyCosmos" id="P69350">
    <property type="glycosylation" value="13 sites, No reported glycans"/>
</dbReference>
<dbReference type="GO" id="GO:0005576">
    <property type="term" value="C:extracellular region"/>
    <property type="evidence" value="ECO:0007669"/>
    <property type="project" value="UniProtKB-SubCell"/>
</dbReference>
<dbReference type="GO" id="GO:0020002">
    <property type="term" value="C:host cell plasma membrane"/>
    <property type="evidence" value="ECO:0007669"/>
    <property type="project" value="UniProtKB-SubCell"/>
</dbReference>
<dbReference type="GO" id="GO:0016020">
    <property type="term" value="C:membrane"/>
    <property type="evidence" value="ECO:0007669"/>
    <property type="project" value="UniProtKB-KW"/>
</dbReference>
<dbReference type="GO" id="GO:0055036">
    <property type="term" value="C:virion membrane"/>
    <property type="evidence" value="ECO:0007669"/>
    <property type="project" value="UniProtKB-SubCell"/>
</dbReference>
<dbReference type="GO" id="GO:0046718">
    <property type="term" value="P:symbiont entry into host cell"/>
    <property type="evidence" value="ECO:0007669"/>
    <property type="project" value="UniProtKB-KW"/>
</dbReference>
<dbReference type="GO" id="GO:0019062">
    <property type="term" value="P:virion attachment to host cell"/>
    <property type="evidence" value="ECO:0007669"/>
    <property type="project" value="UniProtKB-KW"/>
</dbReference>
<dbReference type="InterPro" id="IPR000925">
    <property type="entry name" value="G_prot"/>
</dbReference>
<dbReference type="Pfam" id="PF00802">
    <property type="entry name" value="Glycoprotein_G"/>
    <property type="match status" value="1"/>
</dbReference>
<sequence length="257" mass="28388">MSNHTHHLKFKTLKRAWKASKYFIVGLSCLYKFNLKSLVQTALTTLAMITLTSLVITALIYISVGNAKAKPTSKPTIQQTQRPQNHTSPLFTEHNYKSTHTSIQSTTLSQLLNIDTTRGTTYSHPTDETQNRKIKSQSTLPATRQPPINPSGSNPPENHQDHNNSQTLPYVPCSTCEGNLACSSLCQIGLERAPSRAPTITLKKAPKPKTTKKPTKTTIHHRTSPEAKLQPKNNTAAPQQGILSSPEHHTNQSTTQI</sequence>
<comment type="function">
    <molecule>Isoform Membrane-bound glycoprotein G</molecule>
    <text evidence="1">Attaches the virion to the host cell membrane by interacting with heparan sulfate, initiating the infection. Unlike the other paramyxovirus attachment proteins, lacks both neuraminidase and hemagglutinating activities.</text>
</comment>
<comment type="function">
    <molecule>Isoform Secreted glycoprotein G</molecule>
    <text evidence="1">Helps the virus escape antibody-dependent restriction of replication by acting as an antigen decoy and by modulating the activity of leukocytes bearing Fc-gamma receptors.</text>
</comment>
<comment type="subunit">
    <molecule>Isoform Membrane-bound glycoprotein G</molecule>
    <text evidence="1">Homooligomer. Interacts (via N-terminus) with protein M. Part of a complex composed of F1, F2 and G glycoproteins. Interacts with protein SH. Interacts with host heparate sulfate; this interaction probably participates in the viral attachment to the host cell.</text>
</comment>
<comment type="subcellular location">
    <molecule>Isoform Membrane-bound glycoprotein G</molecule>
    <subcellularLocation>
        <location evidence="1">Virion membrane</location>
        <topology evidence="1">Single-pass type II membrane protein</topology>
    </subcellularLocation>
    <subcellularLocation>
        <location evidence="1">Host cell membrane</location>
        <topology evidence="1">Single-pass type II membrane protein</topology>
    </subcellularLocation>
</comment>
<comment type="subcellular location">
    <molecule>Isoform Secreted glycoprotein G</molecule>
    <subcellularLocation>
        <location evidence="2">Secreted</location>
    </subcellularLocation>
    <text evidence="2">The protein is shed from infected cells before the appearance of progeny virus. The initiation at the downstream methionine removes a portion of the transmembrane domain. The remaining hydrophobic portion of the sG protein is essential for translocating it into the lumen of the ER during translation and would likely maintain its membrane association until a proteolytic event releases the mature sG protein into the medium.</text>
</comment>
<comment type="alternative products">
    <event type="alternative initiation"/>
    <isoform>
        <id>P69350-1</id>
        <name>Membrane-bound glycoprotein G</name>
        <sequence type="displayed"/>
    </isoform>
    <isoform>
        <id>P69350-2</id>
        <name>Secreted glycoprotein G</name>
        <sequence type="described" ref="VSP_036518"/>
    </isoform>
</comment>
<comment type="domain">
    <molecule>Isoform Membrane-bound glycoprotein G</molecule>
    <text evidence="1">Contains a linear heparin binding domain essential for virus attachment to the host.</text>
</comment>
<comment type="PTM">
    <molecule>Isoform Secreted glycoprotein G</molecule>
    <text evidence="2">Cleaved to give rise to the mature sG protein which lacks the transmembrane domain.</text>
</comment>
<comment type="PTM">
    <molecule>Isoform Membrane-bound glycoprotein G</molecule>
    <text evidence="1">N- and O-glycosylated. May carry 30-40 separate O-linked carbohydrate chains distributed among the serine and threonine residues.</text>
</comment>
<comment type="PTM">
    <molecule>Isoform Membrane-bound glycoprotein G</molecule>
    <text evidence="1">Palmitoylated.</text>
</comment>
<comment type="similarity">
    <text evidence="5">Belongs to the pneumoviruses glycoprotein G family.</text>
</comment>
<accession>P69350</accession>
<accession>O12584</accession>
<accession>O12865</accession>
<accession>Q84183</accession>
<protein>
    <recommendedName>
        <fullName>Major surface glycoprotein G</fullName>
    </recommendedName>
    <alternativeName>
        <fullName>Attachment glycoprotein G</fullName>
    </alternativeName>
    <alternativeName>
        <fullName>Membrane-bound glycoprotein</fullName>
        <shortName>mG</shortName>
    </alternativeName>
    <component>
        <recommendedName>
            <fullName evidence="2">Mature secreted glycoprotein G</fullName>
            <shortName evidence="2">Mature sG</shortName>
        </recommendedName>
    </component>
</protein>
<reference key="1">
    <citation type="journal article" date="1997" name="J. Gen. Virol.">
        <title>Antigenic and molecular analyses of the variability of bovine respiratory syncytial virus G glycoprotein.</title>
        <authorList>
            <person name="Prozzi D."/>
            <person name="Walravens K."/>
            <person name="Langedijk J.P."/>
            <person name="Daus F."/>
            <person name="Kramps J.A."/>
            <person name="Letesson J.J."/>
        </authorList>
    </citation>
    <scope>NUCLEOTIDE SEQUENCE [GENOMIC RNA]</scope>
</reference>
<evidence type="ECO:0000250" key="1">
    <source>
        <dbReference type="UniProtKB" id="P03423"/>
    </source>
</evidence>
<evidence type="ECO:0000250" key="2">
    <source>
        <dbReference type="UniProtKB" id="P20895"/>
    </source>
</evidence>
<evidence type="ECO:0000255" key="3"/>
<evidence type="ECO:0000256" key="4">
    <source>
        <dbReference type="SAM" id="MobiDB-lite"/>
    </source>
</evidence>
<evidence type="ECO:0000305" key="5"/>
<gene>
    <name type="primary">G</name>
</gene>
<name>GLYC_BRSVR</name>
<keyword id="KW-0024">Alternative initiation</keyword>
<keyword id="KW-1015">Disulfide bond</keyword>
<keyword id="KW-0325">Glycoprotein</keyword>
<keyword id="KW-1032">Host cell membrane</keyword>
<keyword id="KW-1043">Host membrane</keyword>
<keyword id="KW-0945">Host-virus interaction</keyword>
<keyword id="KW-0472">Membrane</keyword>
<keyword id="KW-0964">Secreted</keyword>
<keyword id="KW-0812">Transmembrane</keyword>
<keyword id="KW-1133">Transmembrane helix</keyword>
<keyword id="KW-1161">Viral attachment to host cell</keyword>
<keyword id="KW-0899">Viral immunoevasion</keyword>
<keyword id="KW-0946">Virion</keyword>
<keyword id="KW-1160">Virus entry into host cell</keyword>
<proteinExistence type="inferred from homology"/>
<organismHost>
    <name type="scientific">Bos taurus</name>
    <name type="common">Bovine</name>
    <dbReference type="NCBI Taxonomy" id="9913"/>
</organismHost>
<organism>
    <name type="scientific">Bovine respiratory syncytial virus (strain Rb94)</name>
    <name type="common">BRS</name>
    <dbReference type="NCBI Taxonomy" id="11249"/>
    <lineage>
        <taxon>Viruses</taxon>
        <taxon>Riboviria</taxon>
        <taxon>Orthornavirae</taxon>
        <taxon>Negarnaviricota</taxon>
        <taxon>Haploviricotina</taxon>
        <taxon>Monjiviricetes</taxon>
        <taxon>Mononegavirales</taxon>
        <taxon>Pneumoviridae</taxon>
        <taxon>Orthopneumovirus</taxon>
        <taxon>Orthopneumovirus bovis</taxon>
    </lineage>
</organism>